<sequence length="478" mass="50718">MKITLPDFTRAGVLVVGDVMLDRYWYGPTNRISPEAPVPVVKVDSVEERPGGAANVAMNIASLGAKSRLVGLTGVDDAARALSAALSGVNVQCDFVSVATHPTITKLRVLSRNQQLIRLDFEEGFDGVDPEPMLERIQRSLPGIGALVLSDYAKGALATVETMIALARKAGVPVLVDPKGTDFSRYHGATLLTPNLSEFEAVVGKCKSEADIVERGTALMQQHALSALLVTRSEHGMTLLQPGKAPFHMPTQAQEVFDVTGAGDTVIGVLATALAAGNTLEESCFLANAAAGVVVGKLGTSTVSPMELENAIHARPESGFGVMSEAQLIVEVKKARQRGEKVVMTNGVFDILHAGHVSYLANARKLGDRLIVAVNSDASTRRLKGETRPVNPLLNRMMVLGALEAVDWVIGFEEDTPQRAIAEILPDLLVKGGDYKPEDIAGSKEVWANGGDVQVLNFEDGISTSNIIKTIISGSGKN</sequence>
<accession>B2VGJ9</accession>
<keyword id="KW-0067">ATP-binding</keyword>
<keyword id="KW-0119">Carbohydrate metabolism</keyword>
<keyword id="KW-0418">Kinase</keyword>
<keyword id="KW-0511">Multifunctional enzyme</keyword>
<keyword id="KW-0547">Nucleotide-binding</keyword>
<keyword id="KW-0548">Nucleotidyltransferase</keyword>
<keyword id="KW-1185">Reference proteome</keyword>
<keyword id="KW-0808">Transferase</keyword>
<reference key="1">
    <citation type="journal article" date="2008" name="Environ. Microbiol.">
        <title>The genome of Erwinia tasmaniensis strain Et1/99, a non-pathogenic bacterium in the genus Erwinia.</title>
        <authorList>
            <person name="Kube M."/>
            <person name="Migdoll A.M."/>
            <person name="Mueller I."/>
            <person name="Kuhl H."/>
            <person name="Beck A."/>
            <person name="Reinhardt R."/>
            <person name="Geider K."/>
        </authorList>
    </citation>
    <scope>NUCLEOTIDE SEQUENCE [LARGE SCALE GENOMIC DNA]</scope>
    <source>
        <strain>DSM 17950 / CFBP 7177 / CIP 109463 / NCPPB 4357 / Et1/99</strain>
    </source>
</reference>
<dbReference type="EC" id="2.7.1.167" evidence="1"/>
<dbReference type="EC" id="2.7.7.70" evidence="1"/>
<dbReference type="EMBL" id="CU468135">
    <property type="protein sequence ID" value="CAO95472.1"/>
    <property type="molecule type" value="Genomic_DNA"/>
</dbReference>
<dbReference type="RefSeq" id="WP_012440183.1">
    <property type="nucleotide sequence ID" value="NC_010694.1"/>
</dbReference>
<dbReference type="SMR" id="B2VGJ9"/>
<dbReference type="STRING" id="465817.ETA_04260"/>
<dbReference type="KEGG" id="eta:ETA_04260"/>
<dbReference type="eggNOG" id="COG0615">
    <property type="taxonomic scope" value="Bacteria"/>
</dbReference>
<dbReference type="eggNOG" id="COG2870">
    <property type="taxonomic scope" value="Bacteria"/>
</dbReference>
<dbReference type="HOGENOM" id="CLU_021150_2_1_6"/>
<dbReference type="OrthoDB" id="9802794at2"/>
<dbReference type="UniPathway" id="UPA00356">
    <property type="reaction ID" value="UER00437"/>
</dbReference>
<dbReference type="UniPathway" id="UPA00356">
    <property type="reaction ID" value="UER00439"/>
</dbReference>
<dbReference type="Proteomes" id="UP000001726">
    <property type="component" value="Chromosome"/>
</dbReference>
<dbReference type="GO" id="GO:0005829">
    <property type="term" value="C:cytosol"/>
    <property type="evidence" value="ECO:0007669"/>
    <property type="project" value="TreeGrafter"/>
</dbReference>
<dbReference type="GO" id="GO:0005524">
    <property type="term" value="F:ATP binding"/>
    <property type="evidence" value="ECO:0007669"/>
    <property type="project" value="UniProtKB-UniRule"/>
</dbReference>
<dbReference type="GO" id="GO:0033785">
    <property type="term" value="F:heptose 7-phosphate kinase activity"/>
    <property type="evidence" value="ECO:0007669"/>
    <property type="project" value="UniProtKB-UniRule"/>
</dbReference>
<dbReference type="GO" id="GO:0033786">
    <property type="term" value="F:heptose-1-phosphate adenylyltransferase activity"/>
    <property type="evidence" value="ECO:0007669"/>
    <property type="project" value="UniProtKB-UniRule"/>
</dbReference>
<dbReference type="GO" id="GO:0016773">
    <property type="term" value="F:phosphotransferase activity, alcohol group as acceptor"/>
    <property type="evidence" value="ECO:0007669"/>
    <property type="project" value="InterPro"/>
</dbReference>
<dbReference type="GO" id="GO:0097171">
    <property type="term" value="P:ADP-L-glycero-beta-D-manno-heptose biosynthetic process"/>
    <property type="evidence" value="ECO:0007669"/>
    <property type="project" value="UniProtKB-UniPathway"/>
</dbReference>
<dbReference type="CDD" id="cd01172">
    <property type="entry name" value="RfaE_like"/>
    <property type="match status" value="1"/>
</dbReference>
<dbReference type="FunFam" id="3.40.1190.20:FF:000002">
    <property type="entry name" value="Bifunctional protein HldE"/>
    <property type="match status" value="1"/>
</dbReference>
<dbReference type="FunFam" id="3.40.50.620:FF:000028">
    <property type="entry name" value="Bifunctional protein HldE"/>
    <property type="match status" value="1"/>
</dbReference>
<dbReference type="Gene3D" id="3.40.1190.20">
    <property type="match status" value="1"/>
</dbReference>
<dbReference type="Gene3D" id="3.40.50.620">
    <property type="entry name" value="HUPs"/>
    <property type="match status" value="1"/>
</dbReference>
<dbReference type="HAMAP" id="MF_01603">
    <property type="entry name" value="HldE"/>
    <property type="match status" value="1"/>
</dbReference>
<dbReference type="InterPro" id="IPR023030">
    <property type="entry name" value="Bifunc_HldE"/>
</dbReference>
<dbReference type="InterPro" id="IPR002173">
    <property type="entry name" value="Carboh/pur_kinase_PfkB_CS"/>
</dbReference>
<dbReference type="InterPro" id="IPR004821">
    <property type="entry name" value="Cyt_trans-like"/>
</dbReference>
<dbReference type="InterPro" id="IPR011611">
    <property type="entry name" value="PfkB_dom"/>
</dbReference>
<dbReference type="InterPro" id="IPR011913">
    <property type="entry name" value="RfaE_dom_I"/>
</dbReference>
<dbReference type="InterPro" id="IPR011914">
    <property type="entry name" value="RfaE_dom_II"/>
</dbReference>
<dbReference type="InterPro" id="IPR029056">
    <property type="entry name" value="Ribokinase-like"/>
</dbReference>
<dbReference type="InterPro" id="IPR014729">
    <property type="entry name" value="Rossmann-like_a/b/a_fold"/>
</dbReference>
<dbReference type="NCBIfam" id="TIGR00125">
    <property type="entry name" value="cyt_tran_rel"/>
    <property type="match status" value="1"/>
</dbReference>
<dbReference type="NCBIfam" id="NF008454">
    <property type="entry name" value="PRK11316.1"/>
    <property type="match status" value="1"/>
</dbReference>
<dbReference type="NCBIfam" id="TIGR02198">
    <property type="entry name" value="rfaE_dom_I"/>
    <property type="match status" value="1"/>
</dbReference>
<dbReference type="NCBIfam" id="TIGR02199">
    <property type="entry name" value="rfaE_dom_II"/>
    <property type="match status" value="1"/>
</dbReference>
<dbReference type="PANTHER" id="PTHR46969">
    <property type="entry name" value="BIFUNCTIONAL PROTEIN HLDE"/>
    <property type="match status" value="1"/>
</dbReference>
<dbReference type="PANTHER" id="PTHR46969:SF1">
    <property type="entry name" value="BIFUNCTIONAL PROTEIN HLDE"/>
    <property type="match status" value="1"/>
</dbReference>
<dbReference type="Pfam" id="PF01467">
    <property type="entry name" value="CTP_transf_like"/>
    <property type="match status" value="1"/>
</dbReference>
<dbReference type="Pfam" id="PF00294">
    <property type="entry name" value="PfkB"/>
    <property type="match status" value="1"/>
</dbReference>
<dbReference type="SUPFAM" id="SSF52374">
    <property type="entry name" value="Nucleotidylyl transferase"/>
    <property type="match status" value="1"/>
</dbReference>
<dbReference type="SUPFAM" id="SSF53613">
    <property type="entry name" value="Ribokinase-like"/>
    <property type="match status" value="1"/>
</dbReference>
<dbReference type="PROSITE" id="PS00583">
    <property type="entry name" value="PFKB_KINASES_1"/>
    <property type="match status" value="1"/>
</dbReference>
<protein>
    <recommendedName>
        <fullName evidence="1">Bifunctional protein HldE</fullName>
    </recommendedName>
    <domain>
        <recommendedName>
            <fullName evidence="1">D-beta-D-heptose 7-phosphate kinase</fullName>
            <ecNumber evidence="1">2.7.1.167</ecNumber>
        </recommendedName>
        <alternativeName>
            <fullName evidence="1">D-beta-D-heptose 7-phosphotransferase</fullName>
        </alternativeName>
        <alternativeName>
            <fullName evidence="1">D-glycero-beta-D-manno-heptose-7-phosphate kinase</fullName>
        </alternativeName>
    </domain>
    <domain>
        <recommendedName>
            <fullName evidence="1">D-beta-D-heptose 1-phosphate adenylyltransferase</fullName>
            <ecNumber evidence="1">2.7.7.70</ecNumber>
        </recommendedName>
        <alternativeName>
            <fullName evidence="1">D-glycero-beta-D-manno-heptose 1-phosphate adenylyltransferase</fullName>
        </alternativeName>
    </domain>
</protein>
<proteinExistence type="inferred from homology"/>
<feature type="chain" id="PRO_1000148124" description="Bifunctional protein HldE">
    <location>
        <begin position="1"/>
        <end position="478"/>
    </location>
</feature>
<feature type="region of interest" description="Ribokinase">
    <location>
        <begin position="1"/>
        <end position="318"/>
    </location>
</feature>
<feature type="region of interest" description="Cytidylyltransferase">
    <location>
        <begin position="344"/>
        <end position="478"/>
    </location>
</feature>
<feature type="active site" evidence="1">
    <location>
        <position position="264"/>
    </location>
</feature>
<feature type="binding site" evidence="1">
    <location>
        <begin position="195"/>
        <end position="198"/>
    </location>
    <ligand>
        <name>ATP</name>
        <dbReference type="ChEBI" id="CHEBI:30616"/>
    </ligand>
</feature>
<name>HLDE_ERWT9</name>
<organism>
    <name type="scientific">Erwinia tasmaniensis (strain DSM 17950 / CFBP 7177 / CIP 109463 / NCPPB 4357 / Et1/99)</name>
    <dbReference type="NCBI Taxonomy" id="465817"/>
    <lineage>
        <taxon>Bacteria</taxon>
        <taxon>Pseudomonadati</taxon>
        <taxon>Pseudomonadota</taxon>
        <taxon>Gammaproteobacteria</taxon>
        <taxon>Enterobacterales</taxon>
        <taxon>Erwiniaceae</taxon>
        <taxon>Erwinia</taxon>
    </lineage>
</organism>
<evidence type="ECO:0000255" key="1">
    <source>
        <dbReference type="HAMAP-Rule" id="MF_01603"/>
    </source>
</evidence>
<gene>
    <name evidence="1" type="primary">hldE</name>
    <name type="ordered locus">ETA_04260</name>
</gene>
<comment type="function">
    <text evidence="1">Catalyzes the phosphorylation of D-glycero-D-manno-heptose 7-phosphate at the C-1 position to selectively form D-glycero-beta-D-manno-heptose-1,7-bisphosphate.</text>
</comment>
<comment type="function">
    <text evidence="1">Catalyzes the ADP transfer from ATP to D-glycero-beta-D-manno-heptose 1-phosphate, yielding ADP-D-glycero-beta-D-manno-heptose.</text>
</comment>
<comment type="catalytic activity">
    <reaction evidence="1">
        <text>D-glycero-beta-D-manno-heptose 7-phosphate + ATP = D-glycero-beta-D-manno-heptose 1,7-bisphosphate + ADP + H(+)</text>
        <dbReference type="Rhea" id="RHEA:27473"/>
        <dbReference type="ChEBI" id="CHEBI:15378"/>
        <dbReference type="ChEBI" id="CHEBI:30616"/>
        <dbReference type="ChEBI" id="CHEBI:60204"/>
        <dbReference type="ChEBI" id="CHEBI:60208"/>
        <dbReference type="ChEBI" id="CHEBI:456216"/>
        <dbReference type="EC" id="2.7.1.167"/>
    </reaction>
</comment>
<comment type="catalytic activity">
    <reaction evidence="1">
        <text>D-glycero-beta-D-manno-heptose 1-phosphate + ATP + H(+) = ADP-D-glycero-beta-D-manno-heptose + diphosphate</text>
        <dbReference type="Rhea" id="RHEA:27465"/>
        <dbReference type="ChEBI" id="CHEBI:15378"/>
        <dbReference type="ChEBI" id="CHEBI:30616"/>
        <dbReference type="ChEBI" id="CHEBI:33019"/>
        <dbReference type="ChEBI" id="CHEBI:59967"/>
        <dbReference type="ChEBI" id="CHEBI:61593"/>
        <dbReference type="EC" id="2.7.7.70"/>
    </reaction>
</comment>
<comment type="pathway">
    <text evidence="1">Nucleotide-sugar biosynthesis; ADP-L-glycero-beta-D-manno-heptose biosynthesis; ADP-L-glycero-beta-D-manno-heptose from D-glycero-beta-D-manno-heptose 7-phosphate: step 1/4.</text>
</comment>
<comment type="pathway">
    <text evidence="1">Nucleotide-sugar biosynthesis; ADP-L-glycero-beta-D-manno-heptose biosynthesis; ADP-L-glycero-beta-D-manno-heptose from D-glycero-beta-D-manno-heptose 7-phosphate: step 3/4.</text>
</comment>
<comment type="subunit">
    <text evidence="1">Homodimer.</text>
</comment>
<comment type="similarity">
    <text evidence="1">In the N-terminal section; belongs to the carbohydrate kinase PfkB family.</text>
</comment>
<comment type="similarity">
    <text evidence="1">In the C-terminal section; belongs to the cytidylyltransferase family.</text>
</comment>